<evidence type="ECO:0000250" key="1">
    <source>
        <dbReference type="UniProtKB" id="Q5SUC9"/>
    </source>
</evidence>
<evidence type="ECO:0000255" key="2"/>
<evidence type="ECO:0000255" key="3">
    <source>
        <dbReference type="PROSITE-ProRule" id="PRU00691"/>
    </source>
</evidence>
<evidence type="ECO:0000256" key="4">
    <source>
        <dbReference type="SAM" id="MobiDB-lite"/>
    </source>
</evidence>
<evidence type="ECO:0000269" key="5">
    <source>
    </source>
</evidence>
<evidence type="ECO:0000269" key="6">
    <source>
    </source>
</evidence>
<evidence type="ECO:0000269" key="7">
    <source>
    </source>
</evidence>
<evidence type="ECO:0000269" key="8">
    <source>
    </source>
</evidence>
<evidence type="ECO:0000269" key="9">
    <source>
    </source>
</evidence>
<evidence type="ECO:0000269" key="10">
    <source>
    </source>
</evidence>
<evidence type="ECO:0000269" key="11">
    <source>
    </source>
</evidence>
<evidence type="ECO:0000269" key="12">
    <source>
    </source>
</evidence>
<evidence type="ECO:0000269" key="13">
    <source>
    </source>
</evidence>
<evidence type="ECO:0000269" key="14">
    <source>
    </source>
</evidence>
<evidence type="ECO:0000269" key="15">
    <source>
    </source>
</evidence>
<evidence type="ECO:0000269" key="16">
    <source>
    </source>
</evidence>
<evidence type="ECO:0000269" key="17">
    <source>
    </source>
</evidence>
<evidence type="ECO:0000305" key="18"/>
<evidence type="ECO:0000305" key="19">
    <source>
    </source>
</evidence>
<evidence type="ECO:0007744" key="20">
    <source>
    </source>
</evidence>
<evidence type="ECO:0007829" key="21">
    <source>
        <dbReference type="PDB" id="1WP0"/>
    </source>
</evidence>
<evidence type="ECO:0007829" key="22">
    <source>
        <dbReference type="PDB" id="2GGT"/>
    </source>
</evidence>
<evidence type="ECO:0007829" key="23">
    <source>
        <dbReference type="PDB" id="2GQL"/>
    </source>
</evidence>
<accession>O75880</accession>
<accession>B2RDM0</accession>
<name>SCO1_HUMAN</name>
<comment type="function">
    <text evidence="1 6 7 8 10 11">Copper metallochaperone essential for the maturation of cytochrome c oxidase subunit II (MT-CO2/COX2). Not required for the synthesis of MT-CO2/COX2 but plays a crucial role in stabilizing MT-CO2/COX2 during its subsequent maturation. Involved in transporting copper to the Cu(A) site on MT-CO2/COX2 (PubMed:15229189, PubMed:15659396, PubMed:16735468, PubMed:17189203, PubMed:19336478). Plays an important role in the regulation of copper homeostasis by controlling the abundance and cell membrane localization of copper transporter CTR1 (By similarity).</text>
</comment>
<comment type="subunit">
    <text evidence="6 8 12 13 14 15 16">Homodimer (PubMed:15229189, PubMed:16735468). Interacts with COA6 (PubMed:26160915). Found in a complex with TMEM177, COX20, COA6, MT-CO2/COX2, COX18 and SCO2 (PubMed:29154948). Interacts with TMEM177 in a COX20-dependent manner (PubMed:29154948). Interacts with COX20 in a MT-CO2/COX2- and COX18-dependent manner (PubMed:24403053, PubMed:28330871, PubMed:29154948). Interacts with COX16 (PubMed:29381136).</text>
</comment>
<comment type="interaction">
    <interactant intactId="EBI-6656171">
        <id>O75880</id>
    </interactant>
    <interactant intactId="EBI-7062247">
        <id>Q9UHD4</id>
        <label>CIDEB</label>
    </interactant>
    <organismsDiffer>false</organismsDiffer>
    <experiments>3</experiments>
</comment>
<comment type="interaction">
    <interactant intactId="EBI-6656171">
        <id>O75880</id>
    </interactant>
    <interactant intactId="EBI-10200977">
        <id>P21964-2</id>
        <label>COMT</label>
    </interactant>
    <organismsDiffer>false</organismsDiffer>
    <experiments>3</experiments>
</comment>
<comment type="interaction">
    <interactant intactId="EBI-6656171">
        <id>O75880</id>
    </interactant>
    <interactant intactId="EBI-711311">
        <id>Q14061</id>
        <label>COX17</label>
    </interactant>
    <organismsDiffer>false</organismsDiffer>
    <experiments>3</experiments>
</comment>
<comment type="subcellular location">
    <subcellularLocation>
        <location evidence="17">Mitochondrion</location>
    </subcellularLocation>
    <subcellularLocation>
        <location evidence="6">Mitochondrion inner membrane</location>
        <topology evidence="2">Single-pass membrane protein</topology>
    </subcellularLocation>
</comment>
<comment type="tissue specificity">
    <text evidence="17">Predominantly expressed in tissues characterized by high rates of oxidative phosphorylation (OxPhos), including muscle, heart, and brain.</text>
</comment>
<comment type="disease" evidence="5 9 10 11">
    <disease id="DI-05929">
        <name>Mitochondrial complex IV deficiency, nuclear type 4</name>
        <acronym>MC4DN4</acronym>
        <description>An autosomal recessive mitochondrial disorder characterized by hypotonia, encephalopathy, metabolic acidosis, poor feeding, hepatomegaly, and hypertrophic cardiomyopathy in some patients. Death occurs in infancy. Patient tissues show decreased levels and activity of mitochondrial respiratory complex IV.</description>
        <dbReference type="MIM" id="619048"/>
    </disease>
    <text>The disease is caused by variants affecting the gene represented in this entry.</text>
</comment>
<comment type="similarity">
    <text evidence="18">Belongs to the SCO1/2 family.</text>
</comment>
<sequence>MAMLVLVPGRVMRPLGGQLWRFLPRGLEFWGPAEGTARVLLRQFCARQAEAWRASGRPGYCLGTRPLSTARPPPPWSQKGPGDSTRPSKPGPVSWKSLAITFAIGGALLAGMKHVKKEKAEKLEKERQRHIGKPLLGGPFSLTTHTGERKTDKDYLGQWLLIYFGFTHCPDVCPEELEKMIQVVDEIDSITTLPDLTPLFISIDPERDTKEAIANYVKEFSPKLVGLTGTREEVDQVARAYRVYYSPGPKDEDEDYIVDHTIIMYLIGPDGEFLDYFGQNKRKGEIAASIATHMRPYRKKS</sequence>
<feature type="transit peptide" description="Mitochondrion" evidence="2 20">
    <location>
        <begin position="1"/>
        <end position="67"/>
    </location>
</feature>
<feature type="chain" id="PRO_0000031921" description="Protein SCO1 homolog, mitochondrial">
    <location>
        <begin position="68"/>
        <end position="301"/>
    </location>
</feature>
<feature type="topological domain" description="Mitochondrial matrix" evidence="19">
    <location>
        <begin position="68"/>
        <end position="92"/>
    </location>
</feature>
<feature type="transmembrane region" description="Helical" evidence="2">
    <location>
        <begin position="93"/>
        <end position="111"/>
    </location>
</feature>
<feature type="topological domain" description="Mitochondrial intermembrane" evidence="19">
    <location>
        <begin position="112"/>
        <end position="301"/>
    </location>
</feature>
<feature type="region of interest" description="Disordered" evidence="4">
    <location>
        <begin position="63"/>
        <end position="91"/>
    </location>
</feature>
<feature type="region of interest" description="Important for dimerization">
    <location>
        <begin position="118"/>
        <end position="131"/>
    </location>
</feature>
<feature type="binding site">
    <location>
        <position position="169"/>
    </location>
    <ligand>
        <name>Cu cation</name>
        <dbReference type="ChEBI" id="CHEBI:23378"/>
    </ligand>
</feature>
<feature type="binding site">
    <location>
        <position position="173"/>
    </location>
    <ligand>
        <name>Cu cation</name>
        <dbReference type="ChEBI" id="CHEBI:23378"/>
    </ligand>
</feature>
<feature type="binding site">
    <location>
        <position position="260"/>
    </location>
    <ligand>
        <name>Cu cation</name>
        <dbReference type="ChEBI" id="CHEBI:23378"/>
    </ligand>
</feature>
<feature type="disulfide bond" description="Redox-active" evidence="3">
    <location>
        <begin position="169"/>
        <end position="173"/>
    </location>
</feature>
<feature type="sequence variant" id="VAR_014537" description="In dbSNP:rs1802083.">
    <original>P</original>
    <variation>S</variation>
    <location>
        <position position="58"/>
    </location>
</feature>
<feature type="sequence variant" id="VAR_012109" description="In MC4DN4; no effect on synthesis of cytochrome c oxidase subunit II; reduced stability of newly synthesized cytochrome c oxidase subunit II; reduced copper-binding; dbSNP:rs104894630." evidence="5 9 10 11">
    <original>P</original>
    <variation>L</variation>
    <location>
        <position position="174"/>
    </location>
</feature>
<feature type="strand" evidence="22">
    <location>
        <begin position="141"/>
        <end position="144"/>
    </location>
</feature>
<feature type="strand" evidence="22">
    <location>
        <begin position="149"/>
        <end position="151"/>
    </location>
</feature>
<feature type="helix" evidence="22">
    <location>
        <begin position="152"/>
        <end position="155"/>
    </location>
</feature>
<feature type="strand" evidence="22">
    <location>
        <begin position="159"/>
        <end position="165"/>
    </location>
</feature>
<feature type="helix" evidence="22">
    <location>
        <begin position="172"/>
        <end position="189"/>
    </location>
</feature>
<feature type="strand" evidence="22">
    <location>
        <begin position="190"/>
        <end position="193"/>
    </location>
</feature>
<feature type="strand" evidence="22">
    <location>
        <begin position="196"/>
        <end position="203"/>
    </location>
</feature>
<feature type="turn" evidence="22">
    <location>
        <begin position="205"/>
        <end position="207"/>
    </location>
</feature>
<feature type="helix" evidence="22">
    <location>
        <begin position="210"/>
        <end position="218"/>
    </location>
</feature>
<feature type="strand" evidence="22">
    <location>
        <begin position="225"/>
        <end position="228"/>
    </location>
</feature>
<feature type="helix" evidence="22">
    <location>
        <begin position="231"/>
        <end position="239"/>
    </location>
</feature>
<feature type="turn" evidence="22">
    <location>
        <begin position="240"/>
        <end position="242"/>
    </location>
</feature>
<feature type="strand" evidence="22">
    <location>
        <begin position="245"/>
        <end position="250"/>
    </location>
</feature>
<feature type="helix" evidence="21">
    <location>
        <begin position="252"/>
        <end position="254"/>
    </location>
</feature>
<feature type="strand" evidence="22">
    <location>
        <begin position="256"/>
        <end position="260"/>
    </location>
</feature>
<feature type="strand" evidence="22">
    <location>
        <begin position="263"/>
        <end position="267"/>
    </location>
</feature>
<feature type="helix" evidence="23">
    <location>
        <begin position="269"/>
        <end position="271"/>
    </location>
</feature>
<feature type="strand" evidence="22">
    <location>
        <begin position="273"/>
        <end position="278"/>
    </location>
</feature>
<feature type="helix" evidence="22">
    <location>
        <begin position="283"/>
        <end position="294"/>
    </location>
</feature>
<feature type="helix" evidence="22">
    <location>
        <begin position="295"/>
        <end position="297"/>
    </location>
</feature>
<organism>
    <name type="scientific">Homo sapiens</name>
    <name type="common">Human</name>
    <dbReference type="NCBI Taxonomy" id="9606"/>
    <lineage>
        <taxon>Eukaryota</taxon>
        <taxon>Metazoa</taxon>
        <taxon>Chordata</taxon>
        <taxon>Craniata</taxon>
        <taxon>Vertebrata</taxon>
        <taxon>Euteleostomi</taxon>
        <taxon>Mammalia</taxon>
        <taxon>Eutheria</taxon>
        <taxon>Euarchontoglires</taxon>
        <taxon>Primates</taxon>
        <taxon>Haplorrhini</taxon>
        <taxon>Catarrhini</taxon>
        <taxon>Hominidae</taxon>
        <taxon>Homo</taxon>
    </lineage>
</organism>
<proteinExistence type="evidence at protein level"/>
<reference key="1">
    <citation type="journal article" date="1998" name="Genomics">
        <title>Identification and characterization of human cDNAs specific to BCS1, PET112, SCO1, COX15, and COX11, five genes involved in the formation and function of the mitochondrial respiratory chain.</title>
        <authorList>
            <person name="Petruzzella V."/>
            <person name="Tiranti V."/>
            <person name="Fernandez P."/>
            <person name="Ianna P."/>
            <person name="Carrozzo R."/>
            <person name="Zeviani M."/>
        </authorList>
    </citation>
    <scope>NUCLEOTIDE SEQUENCE [MRNA]</scope>
    <scope>SUBCELLULAR LOCATION</scope>
    <scope>TISSUE SPECIFICITY</scope>
</reference>
<reference key="2">
    <citation type="journal article" date="2000" name="Biochem. Biophys. Res. Commun.">
        <title>Characterization of human SCO1 and COX17 genes in mitochondrial cytochrome-c-oxidase deficiency.</title>
        <authorList>
            <person name="Horvath R."/>
            <person name="Lochmuller H."/>
            <person name="Stucka R."/>
            <person name="Yao J."/>
            <person name="Shoubridge E.A."/>
            <person name="Kim S.-H."/>
            <person name="Gerbitz K.-D."/>
            <person name="Jaksch M."/>
        </authorList>
    </citation>
    <scope>NUCLEOTIDE SEQUENCE [GENOMIC DNA]</scope>
</reference>
<reference key="3">
    <citation type="submission" date="1999-09" db="EMBL/GenBank/DDBJ databases">
        <title>A novel gene expressed in human adrenal gland.</title>
        <authorList>
            <person name="Peng Y."/>
            <person name="Li Y."/>
            <person name="Tu Y."/>
            <person name="Xu S."/>
            <person name="Han Z."/>
            <person name="Fu G."/>
            <person name="Chen Z."/>
        </authorList>
    </citation>
    <scope>NUCLEOTIDE SEQUENCE [LARGE SCALE MRNA]</scope>
    <source>
        <tissue>Adrenal gland</tissue>
    </source>
</reference>
<reference key="4">
    <citation type="journal article" date="2004" name="Nat. Genet.">
        <title>Complete sequencing and characterization of 21,243 full-length human cDNAs.</title>
        <authorList>
            <person name="Ota T."/>
            <person name="Suzuki Y."/>
            <person name="Nishikawa T."/>
            <person name="Otsuki T."/>
            <person name="Sugiyama T."/>
            <person name="Irie R."/>
            <person name="Wakamatsu A."/>
            <person name="Hayashi K."/>
            <person name="Sato H."/>
            <person name="Nagai K."/>
            <person name="Kimura K."/>
            <person name="Makita H."/>
            <person name="Sekine M."/>
            <person name="Obayashi M."/>
            <person name="Nishi T."/>
            <person name="Shibahara T."/>
            <person name="Tanaka T."/>
            <person name="Ishii S."/>
            <person name="Yamamoto J."/>
            <person name="Saito K."/>
            <person name="Kawai Y."/>
            <person name="Isono Y."/>
            <person name="Nakamura Y."/>
            <person name="Nagahari K."/>
            <person name="Murakami K."/>
            <person name="Yasuda T."/>
            <person name="Iwayanagi T."/>
            <person name="Wagatsuma M."/>
            <person name="Shiratori A."/>
            <person name="Sudo H."/>
            <person name="Hosoiri T."/>
            <person name="Kaku Y."/>
            <person name="Kodaira H."/>
            <person name="Kondo H."/>
            <person name="Sugawara M."/>
            <person name="Takahashi M."/>
            <person name="Kanda K."/>
            <person name="Yokoi T."/>
            <person name="Furuya T."/>
            <person name="Kikkawa E."/>
            <person name="Omura Y."/>
            <person name="Abe K."/>
            <person name="Kamihara K."/>
            <person name="Katsuta N."/>
            <person name="Sato K."/>
            <person name="Tanikawa M."/>
            <person name="Yamazaki M."/>
            <person name="Ninomiya K."/>
            <person name="Ishibashi T."/>
            <person name="Yamashita H."/>
            <person name="Murakawa K."/>
            <person name="Fujimori K."/>
            <person name="Tanai H."/>
            <person name="Kimata M."/>
            <person name="Watanabe M."/>
            <person name="Hiraoka S."/>
            <person name="Chiba Y."/>
            <person name="Ishida S."/>
            <person name="Ono Y."/>
            <person name="Takiguchi S."/>
            <person name="Watanabe S."/>
            <person name="Yosida M."/>
            <person name="Hotuta T."/>
            <person name="Kusano J."/>
            <person name="Kanehori K."/>
            <person name="Takahashi-Fujii A."/>
            <person name="Hara H."/>
            <person name="Tanase T.-O."/>
            <person name="Nomura Y."/>
            <person name="Togiya S."/>
            <person name="Komai F."/>
            <person name="Hara R."/>
            <person name="Takeuchi K."/>
            <person name="Arita M."/>
            <person name="Imose N."/>
            <person name="Musashino K."/>
            <person name="Yuuki H."/>
            <person name="Oshima A."/>
            <person name="Sasaki N."/>
            <person name="Aotsuka S."/>
            <person name="Yoshikawa Y."/>
            <person name="Matsunawa H."/>
            <person name="Ichihara T."/>
            <person name="Shiohata N."/>
            <person name="Sano S."/>
            <person name="Moriya S."/>
            <person name="Momiyama H."/>
            <person name="Satoh N."/>
            <person name="Takami S."/>
            <person name="Terashima Y."/>
            <person name="Suzuki O."/>
            <person name="Nakagawa S."/>
            <person name="Senoh A."/>
            <person name="Mizoguchi H."/>
            <person name="Goto Y."/>
            <person name="Shimizu F."/>
            <person name="Wakebe H."/>
            <person name="Hishigaki H."/>
            <person name="Watanabe T."/>
            <person name="Sugiyama A."/>
            <person name="Takemoto M."/>
            <person name="Kawakami B."/>
            <person name="Yamazaki M."/>
            <person name="Watanabe K."/>
            <person name="Kumagai A."/>
            <person name="Itakura S."/>
            <person name="Fukuzumi Y."/>
            <person name="Fujimori Y."/>
            <person name="Komiyama M."/>
            <person name="Tashiro H."/>
            <person name="Tanigami A."/>
            <person name="Fujiwara T."/>
            <person name="Ono T."/>
            <person name="Yamada K."/>
            <person name="Fujii Y."/>
            <person name="Ozaki K."/>
            <person name="Hirao M."/>
            <person name="Ohmori Y."/>
            <person name="Kawabata A."/>
            <person name="Hikiji T."/>
            <person name="Kobatake N."/>
            <person name="Inagaki H."/>
            <person name="Ikema Y."/>
            <person name="Okamoto S."/>
            <person name="Okitani R."/>
            <person name="Kawakami T."/>
            <person name="Noguchi S."/>
            <person name="Itoh T."/>
            <person name="Shigeta K."/>
            <person name="Senba T."/>
            <person name="Matsumura K."/>
            <person name="Nakajima Y."/>
            <person name="Mizuno T."/>
            <person name="Morinaga M."/>
            <person name="Sasaki M."/>
            <person name="Togashi T."/>
            <person name="Oyama M."/>
            <person name="Hata H."/>
            <person name="Watanabe M."/>
            <person name="Komatsu T."/>
            <person name="Mizushima-Sugano J."/>
            <person name="Satoh T."/>
            <person name="Shirai Y."/>
            <person name="Takahashi Y."/>
            <person name="Nakagawa K."/>
            <person name="Okumura K."/>
            <person name="Nagase T."/>
            <person name="Nomura N."/>
            <person name="Kikuchi H."/>
            <person name="Masuho Y."/>
            <person name="Yamashita R."/>
            <person name="Nakai K."/>
            <person name="Yada T."/>
            <person name="Nakamura Y."/>
            <person name="Ohara O."/>
            <person name="Isogai T."/>
            <person name="Sugano S."/>
        </authorList>
    </citation>
    <scope>NUCLEOTIDE SEQUENCE [LARGE SCALE MRNA]</scope>
    <source>
        <tissue>Placenta</tissue>
    </source>
</reference>
<reference key="5">
    <citation type="submission" date="2005-09" db="EMBL/GenBank/DDBJ databases">
        <authorList>
            <person name="Mural R.J."/>
            <person name="Istrail S."/>
            <person name="Sutton G.G."/>
            <person name="Florea L."/>
            <person name="Halpern A.L."/>
            <person name="Mobarry C.M."/>
            <person name="Lippert R."/>
            <person name="Walenz B."/>
            <person name="Shatkay H."/>
            <person name="Dew I."/>
            <person name="Miller J.R."/>
            <person name="Flanigan M.J."/>
            <person name="Edwards N.J."/>
            <person name="Bolanos R."/>
            <person name="Fasulo D."/>
            <person name="Halldorsson B.V."/>
            <person name="Hannenhalli S."/>
            <person name="Turner R."/>
            <person name="Yooseph S."/>
            <person name="Lu F."/>
            <person name="Nusskern D.R."/>
            <person name="Shue B.C."/>
            <person name="Zheng X.H."/>
            <person name="Zhong F."/>
            <person name="Delcher A.L."/>
            <person name="Huson D.H."/>
            <person name="Kravitz S.A."/>
            <person name="Mouchard L."/>
            <person name="Reinert K."/>
            <person name="Remington K.A."/>
            <person name="Clark A.G."/>
            <person name="Waterman M.S."/>
            <person name="Eichler E.E."/>
            <person name="Adams M.D."/>
            <person name="Hunkapiller M.W."/>
            <person name="Myers E.W."/>
            <person name="Venter J.C."/>
        </authorList>
    </citation>
    <scope>NUCLEOTIDE SEQUENCE [LARGE SCALE GENOMIC DNA]</scope>
</reference>
<reference key="6">
    <citation type="journal article" date="2004" name="Genome Res.">
        <title>The status, quality, and expansion of the NIH full-length cDNA project: the Mammalian Gene Collection (MGC).</title>
        <authorList>
            <consortium name="The MGC Project Team"/>
        </authorList>
    </citation>
    <scope>NUCLEOTIDE SEQUENCE [LARGE SCALE MRNA]</scope>
    <source>
        <tissue>Uterus</tissue>
    </source>
</reference>
<reference key="7">
    <citation type="submission" date="1999-02" db="EMBL/GenBank/DDBJ databases">
        <authorList>
            <person name="Mei G."/>
            <person name="Yu W."/>
            <person name="Gibbs R.A."/>
        </authorList>
    </citation>
    <scope>NUCLEOTIDE SEQUENCE [LARGE SCALE MRNA] OF 112-301</scope>
    <source>
        <tissue>Brain</tissue>
    </source>
</reference>
<reference key="8">
    <citation type="journal article" date="2004" name="Hum. Mol. Genet.">
        <title>Human SCO1 and SCO2 have independent, cooperative functions in copper delivery to cytochrome c oxidase.</title>
        <authorList>
            <person name="Leary S.C."/>
            <person name="Kaufman B.A."/>
            <person name="Pellecchia G."/>
            <person name="Guercin G.H."/>
            <person name="Mattman A."/>
            <person name="Jaksch M."/>
            <person name="Shoubridge E.A."/>
        </authorList>
    </citation>
    <scope>FUNCTION</scope>
    <scope>SUBCELLULAR LOCATION</scope>
    <scope>TOPOLOGY</scope>
    <scope>SUBUNIT</scope>
</reference>
<reference key="9">
    <citation type="journal article" date="2007" name="Cell Metab.">
        <title>The human cytochrome c oxidase assembly factors SCO1 and SCO2 have regulatory roles in the maintenance of cellular copper homeostasis.</title>
        <authorList>
            <person name="Leary S.C."/>
            <person name="Cobine P.A."/>
            <person name="Kaufman B.A."/>
            <person name="Guercin G.H."/>
            <person name="Mattman A."/>
            <person name="Palaty J."/>
            <person name="Lockitch G."/>
            <person name="Winge D.R."/>
            <person name="Rustin P."/>
            <person name="Horvath R."/>
            <person name="Shoubridge E.A."/>
        </authorList>
    </citation>
    <scope>FUNCTION</scope>
    <scope>CHARACTERIZATION OF VARIANT MC4DN4 LEU-174</scope>
</reference>
<reference key="10">
    <citation type="journal article" date="2009" name="Hum. Mol. Genet.">
        <title>Human SCO2 is required for the synthesis of CO II and as a thiol-disulphide oxidoreductase for SCO1.</title>
        <authorList>
            <person name="Leary S.C."/>
            <person name="Sasarman F."/>
            <person name="Nishimura T."/>
            <person name="Shoubridge E.A."/>
        </authorList>
    </citation>
    <scope>FUNCTION</scope>
    <scope>CHARACTERIZATION OF VARIANT MC4DN4 LEU-174</scope>
</reference>
<reference key="11">
    <citation type="journal article" date="2011" name="BMC Syst. Biol.">
        <title>Initial characterization of the human central proteome.</title>
        <authorList>
            <person name="Burkard T.R."/>
            <person name="Planyavsky M."/>
            <person name="Kaupe I."/>
            <person name="Breitwieser F.P."/>
            <person name="Buerckstuemmer T."/>
            <person name="Bennett K.L."/>
            <person name="Superti-Furga G."/>
            <person name="Colinge J."/>
        </authorList>
    </citation>
    <scope>IDENTIFICATION BY MASS SPECTROMETRY [LARGE SCALE ANALYSIS]</scope>
</reference>
<reference key="12">
    <citation type="journal article" date="2014" name="Hum. Mol. Genet.">
        <title>Human COX20 cooperates with SCO1 and SCO2 to mature COX2 and promote the assembly of cytochrome c oxidase.</title>
        <authorList>
            <person name="Bourens M."/>
            <person name="Boulet A."/>
            <person name="Leary S.C."/>
            <person name="Barrientos A."/>
        </authorList>
    </citation>
    <scope>INTERACTION WITH COX20</scope>
</reference>
<reference key="13">
    <citation type="journal article" date="2015" name="Hum. Mol. Genet.">
        <title>COA6 is a mitochondrial complex IV assembly factor critical for biogenesis of mtDNA-encoded COX2.</title>
        <authorList>
            <person name="Stroud D.A."/>
            <person name="Maher M.J."/>
            <person name="Lindau C."/>
            <person name="Voegtle F.N."/>
            <person name="Frazier A.E."/>
            <person name="Surgenor E."/>
            <person name="Mountford H."/>
            <person name="Singh A.P."/>
            <person name="Bonas M."/>
            <person name="Oeljeklaus S."/>
            <person name="Warscheid B."/>
            <person name="Meisinger C."/>
            <person name="Thorburn D.R."/>
            <person name="Ryan M.T."/>
        </authorList>
    </citation>
    <scope>INTERACTION WITH COA6</scope>
</reference>
<reference key="14">
    <citation type="journal article" date="2015" name="Proteomics">
        <title>N-terminome analysis of the human mitochondrial proteome.</title>
        <authorList>
            <person name="Vaca Jacome A.S."/>
            <person name="Rabilloud T."/>
            <person name="Schaeffer-Reiss C."/>
            <person name="Rompais M."/>
            <person name="Ayoub D."/>
            <person name="Lane L."/>
            <person name="Bairoch A."/>
            <person name="Van Dorsselaer A."/>
            <person name="Carapito C."/>
        </authorList>
    </citation>
    <scope>CLEAVAGE OF TRANSIT PEPTIDE [LARGE SCALE ANALYSIS] AFTER LEU-67</scope>
    <scope>IDENTIFICATION BY MASS SPECTROMETRY [LARGE SCALE ANALYSIS]</scope>
</reference>
<reference key="15">
    <citation type="journal article" date="2017" name="Biochim. Biophys. Acta">
        <title>The mitochondrial TMEM177 associates with COX20 during COX2 biogenesis.</title>
        <authorList>
            <person name="Lorenzi I."/>
            <person name="Oeljeklaus S."/>
            <person name="Aich A."/>
            <person name="Ronsoer C."/>
            <person name="Callegari S."/>
            <person name="Dudek J."/>
            <person name="Warscheid B."/>
            <person name="Dennerlein S."/>
            <person name="Rehling P."/>
        </authorList>
    </citation>
    <scope>IDENTIFICATION IN A COMPLEX WITH TMEM177; COA6; MT-CO2; COX20; COX18 AND SCO2</scope>
    <scope>INTERACTION WITH TMEM177 AND COX20</scope>
</reference>
<reference key="16">
    <citation type="journal article" date="2017" name="J. Biol. Chem.">
        <title>Human mitochondrial cytochrome c oxidase assembly factor COX18 acts transiently as a membrane insertase within the subunit 2 maturation module.</title>
        <authorList>
            <person name="Bourens M."/>
            <person name="Barrientos A."/>
        </authorList>
    </citation>
    <scope>INTERACTION WITH COX20</scope>
</reference>
<reference key="17">
    <citation type="journal article" date="2018" name="Elife">
        <title>COX16 promotes COX2 metallation and assembly during respiratory complex IV biogenesis.</title>
        <authorList>
            <person name="Aich A."/>
            <person name="Wang C."/>
            <person name="Chowdhury A."/>
            <person name="Ronsoer C."/>
            <person name="Pacheu-Grau D."/>
            <person name="Richter-Dennerlein R."/>
            <person name="Dennerlein S."/>
            <person name="Rehling P."/>
        </authorList>
    </citation>
    <scope>INTERACTION WITH COX16</scope>
</reference>
<reference key="18">
    <citation type="journal article" date="2005" name="J. Biol. Chem.">
        <title>Crystal structure of human SCO1: implications for redox signaling by a mitochondrial cytochrome c oxidase 'assembly' protein.</title>
        <authorList>
            <person name="Williams J.C."/>
            <person name="Sue C."/>
            <person name="Banting G.S."/>
            <person name="Yang H."/>
            <person name="Glerum D.M."/>
            <person name="Hendrickson W.A."/>
            <person name="Schon E.A."/>
        </authorList>
    </citation>
    <scope>X-RAY CRYSTALLOGRAPHY (2.8 ANGSTROMS) OF 138-301</scope>
    <scope>FUNCTION</scope>
</reference>
<reference key="19">
    <citation type="journal article" date="2006" name="Proc. Natl. Acad. Sci. U.S.A.">
        <title>A hint for the function of human Sco1 from different structures.</title>
        <authorList>
            <person name="Banci L."/>
            <person name="Bertini I."/>
            <person name="Calderone V."/>
            <person name="Ciofi-Baffoni S."/>
            <person name="Mangani S."/>
            <person name="Martinelli M."/>
            <person name="Palumaa P."/>
            <person name="Wang S."/>
        </authorList>
    </citation>
    <scope>STRUCTURE BY NMR OF 132-301 IN COMPLEX WITH METAL IONS</scope>
    <scope>FUNCTION</scope>
    <scope>SUBUNIT</scope>
    <scope>IDENTIFICATION BY MASS SPECTROMETRY</scope>
</reference>
<reference key="20">
    <citation type="journal article" date="2001" name="Am. J. Med. Genet.">
        <title>Cytochrome c oxidase deficiency.</title>
        <authorList>
            <person name="Shoubridge E.A."/>
        </authorList>
    </citation>
    <scope>REVIEW ON MC4DN4</scope>
</reference>
<reference key="21">
    <citation type="journal article" date="2000" name="Am. J. Hum. Genet.">
        <title>Mutations of the SCO1 gene in mitochondrial cytochrome c oxidase deficiency with neonatal-onset hepatic failure and encephalopathy.</title>
        <authorList>
            <person name="Valnot I."/>
            <person name="Osmond S."/>
            <person name="Gigarel N."/>
            <person name="Mehaye B."/>
            <person name="Amiel J."/>
            <person name="Cormier-Daire V."/>
            <person name="Munnich A."/>
            <person name="Bonnefont J.-P."/>
            <person name="Rustin P."/>
            <person name="Rotig A."/>
        </authorList>
    </citation>
    <scope>VARIANT MC4DN4 LEU-174</scope>
</reference>
<reference key="22">
    <citation type="journal article" date="2007" name="Proc. Natl. Acad. Sci. U.S.A.">
        <title>Human Sco1 functional studies and pathological implications of the P174L mutant.</title>
        <authorList>
            <person name="Banci L."/>
            <person name="Bertini I."/>
            <person name="Ciofi-Baffoni S."/>
            <person name="Leontari I."/>
            <person name="Martinelli M."/>
            <person name="Palumaa P."/>
            <person name="Sillard R."/>
            <person name="Wang S."/>
        </authorList>
    </citation>
    <scope>CHARACTERIZATION OF VARIANT MC4DN4 LEU-174</scope>
</reference>
<protein>
    <recommendedName>
        <fullName>Protein SCO1 homolog, mitochondrial</fullName>
    </recommendedName>
</protein>
<dbReference type="EMBL" id="AF026852">
    <property type="protein sequence ID" value="AAD08641.1"/>
    <property type="molecule type" value="mRNA"/>
</dbReference>
<dbReference type="EMBL" id="AF295386">
    <property type="protein sequence ID" value="AAG23836.1"/>
    <property type="molecule type" value="Genomic_DNA"/>
</dbReference>
<dbReference type="EMBL" id="AF295381">
    <property type="protein sequence ID" value="AAG23836.1"/>
    <property type="status" value="JOINED"/>
    <property type="molecule type" value="Genomic_DNA"/>
</dbReference>
<dbReference type="EMBL" id="AF295382">
    <property type="protein sequence ID" value="AAG23836.1"/>
    <property type="status" value="JOINED"/>
    <property type="molecule type" value="Genomic_DNA"/>
</dbReference>
<dbReference type="EMBL" id="AF295383">
    <property type="protein sequence ID" value="AAG23836.1"/>
    <property type="status" value="JOINED"/>
    <property type="molecule type" value="Genomic_DNA"/>
</dbReference>
<dbReference type="EMBL" id="AF295384">
    <property type="protein sequence ID" value="AAG23836.1"/>
    <property type="status" value="JOINED"/>
    <property type="molecule type" value="Genomic_DNA"/>
</dbReference>
<dbReference type="EMBL" id="AF295385">
    <property type="protein sequence ID" value="AAG23836.1"/>
    <property type="status" value="JOINED"/>
    <property type="molecule type" value="Genomic_DNA"/>
</dbReference>
<dbReference type="EMBL" id="AF183424">
    <property type="protein sequence ID" value="AAG09693.1"/>
    <property type="molecule type" value="mRNA"/>
</dbReference>
<dbReference type="EMBL" id="AK315595">
    <property type="protein sequence ID" value="BAG37967.1"/>
    <property type="molecule type" value="mRNA"/>
</dbReference>
<dbReference type="EMBL" id="CH471108">
    <property type="protein sequence ID" value="EAW89997.1"/>
    <property type="molecule type" value="Genomic_DNA"/>
</dbReference>
<dbReference type="EMBL" id="BC015504">
    <property type="protein sequence ID" value="AAH15504.1"/>
    <property type="molecule type" value="mRNA"/>
</dbReference>
<dbReference type="EMBL" id="AF131816">
    <property type="protein sequence ID" value="AAD20051.1"/>
    <property type="molecule type" value="mRNA"/>
</dbReference>
<dbReference type="CCDS" id="CCDS11158.1"/>
<dbReference type="RefSeq" id="NP_004580.1">
    <property type="nucleotide sequence ID" value="NM_004589.4"/>
</dbReference>
<dbReference type="RefSeq" id="XP_005256808.1">
    <property type="nucleotide sequence ID" value="XM_005256751.3"/>
</dbReference>
<dbReference type="PDB" id="1WP0">
    <property type="method" value="X-ray"/>
    <property type="resolution" value="2.80 A"/>
    <property type="chains" value="A/B/C=138-301"/>
</dbReference>
<dbReference type="PDB" id="2GGT">
    <property type="method" value="X-ray"/>
    <property type="resolution" value="2.40 A"/>
    <property type="chains" value="A/B=135-298"/>
</dbReference>
<dbReference type="PDB" id="2GQK">
    <property type="method" value="NMR"/>
    <property type="chains" value="A=132-301"/>
</dbReference>
<dbReference type="PDB" id="2GQL">
    <property type="method" value="NMR"/>
    <property type="chains" value="A=132-301"/>
</dbReference>
<dbReference type="PDB" id="2GQM">
    <property type="method" value="NMR"/>
    <property type="chains" value="A=132-301"/>
</dbReference>
<dbReference type="PDB" id="2GT5">
    <property type="method" value="NMR"/>
    <property type="chains" value="A=132-301"/>
</dbReference>
<dbReference type="PDB" id="2GT6">
    <property type="method" value="NMR"/>
    <property type="chains" value="A=132-301"/>
</dbReference>
<dbReference type="PDB" id="2GVP">
    <property type="method" value="NMR"/>
    <property type="chains" value="A=132-301"/>
</dbReference>
<dbReference type="PDB" id="2HRF">
    <property type="method" value="NMR"/>
    <property type="chains" value="A=132-301"/>
</dbReference>
<dbReference type="PDB" id="2HRN">
    <property type="method" value="NMR"/>
    <property type="chains" value="A=132-301"/>
</dbReference>
<dbReference type="PDBsum" id="1WP0"/>
<dbReference type="PDBsum" id="2GGT"/>
<dbReference type="PDBsum" id="2GQK"/>
<dbReference type="PDBsum" id="2GQL"/>
<dbReference type="PDBsum" id="2GQM"/>
<dbReference type="PDBsum" id="2GT5"/>
<dbReference type="PDBsum" id="2GT6"/>
<dbReference type="PDBsum" id="2GVP"/>
<dbReference type="PDBsum" id="2HRF"/>
<dbReference type="PDBsum" id="2HRN"/>
<dbReference type="SMR" id="O75880"/>
<dbReference type="BioGRID" id="112245">
    <property type="interactions" value="172"/>
</dbReference>
<dbReference type="DIP" id="DIP-46086N"/>
<dbReference type="FunCoup" id="O75880">
    <property type="interactions" value="1857"/>
</dbReference>
<dbReference type="IntAct" id="O75880">
    <property type="interactions" value="128"/>
</dbReference>
<dbReference type="MINT" id="O75880"/>
<dbReference type="STRING" id="9606.ENSP00000255390"/>
<dbReference type="DrugBank" id="DB09130">
    <property type="generic name" value="Copper"/>
</dbReference>
<dbReference type="iPTMnet" id="O75880"/>
<dbReference type="PhosphoSitePlus" id="O75880"/>
<dbReference type="SwissPalm" id="O75880"/>
<dbReference type="BioMuta" id="SCO1"/>
<dbReference type="jPOST" id="O75880"/>
<dbReference type="MassIVE" id="O75880"/>
<dbReference type="PaxDb" id="9606-ENSP00000255390"/>
<dbReference type="PeptideAtlas" id="O75880"/>
<dbReference type="ProteomicsDB" id="50236"/>
<dbReference type="Pumba" id="O75880"/>
<dbReference type="TopDownProteomics" id="O75880"/>
<dbReference type="Antibodypedia" id="12932">
    <property type="antibodies" value="155 antibodies from 30 providers"/>
</dbReference>
<dbReference type="DNASU" id="6341"/>
<dbReference type="Ensembl" id="ENST00000255390.10">
    <property type="protein sequence ID" value="ENSP00000255390.5"/>
    <property type="gene ID" value="ENSG00000133028.12"/>
</dbReference>
<dbReference type="GeneID" id="6341"/>
<dbReference type="KEGG" id="hsa:6341"/>
<dbReference type="MANE-Select" id="ENST00000255390.10">
    <property type="protein sequence ID" value="ENSP00000255390.5"/>
    <property type="RefSeq nucleotide sequence ID" value="NM_004589.4"/>
    <property type="RefSeq protein sequence ID" value="NP_004580.1"/>
</dbReference>
<dbReference type="UCSC" id="uc002gmr.5">
    <property type="organism name" value="human"/>
</dbReference>
<dbReference type="AGR" id="HGNC:10603"/>
<dbReference type="CTD" id="6341"/>
<dbReference type="DisGeNET" id="6341"/>
<dbReference type="GeneCards" id="SCO1"/>
<dbReference type="GeneReviews" id="SCO1"/>
<dbReference type="HGNC" id="HGNC:10603">
    <property type="gene designation" value="SCO1"/>
</dbReference>
<dbReference type="HPA" id="ENSG00000133028">
    <property type="expression patterns" value="Low tissue specificity"/>
</dbReference>
<dbReference type="MalaCards" id="SCO1"/>
<dbReference type="MIM" id="603644">
    <property type="type" value="gene"/>
</dbReference>
<dbReference type="MIM" id="619048">
    <property type="type" value="phenotype"/>
</dbReference>
<dbReference type="neXtProt" id="NX_O75880"/>
<dbReference type="OpenTargets" id="ENSG00000133028"/>
<dbReference type="Orphanet" id="1561">
    <property type="disease" value="Fatal infantile cytochrome C oxidase deficiency"/>
</dbReference>
<dbReference type="PharmGKB" id="PA35012"/>
<dbReference type="VEuPathDB" id="HostDB:ENSG00000133028"/>
<dbReference type="eggNOG" id="KOG2792">
    <property type="taxonomic scope" value="Eukaryota"/>
</dbReference>
<dbReference type="GeneTree" id="ENSGT00390000004323"/>
<dbReference type="HOGENOM" id="CLU_050131_0_3_1"/>
<dbReference type="InParanoid" id="O75880"/>
<dbReference type="OMA" id="MLYFRVE"/>
<dbReference type="OrthoDB" id="270009at2759"/>
<dbReference type="PAN-GO" id="O75880">
    <property type="GO annotations" value="1 GO annotation based on evolutionary models"/>
</dbReference>
<dbReference type="PhylomeDB" id="O75880"/>
<dbReference type="TreeFam" id="TF313752"/>
<dbReference type="PathwayCommons" id="O75880"/>
<dbReference type="Reactome" id="R-HSA-9864848">
    <property type="pathway name" value="Complex IV assembly"/>
</dbReference>
<dbReference type="SignaLink" id="O75880"/>
<dbReference type="BioGRID-ORCS" id="6341">
    <property type="hits" value="146 hits in 1178 CRISPR screens"/>
</dbReference>
<dbReference type="CD-CODE" id="DEE660B4">
    <property type="entry name" value="Stress granule"/>
</dbReference>
<dbReference type="ChiTaRS" id="SCO1">
    <property type="organism name" value="human"/>
</dbReference>
<dbReference type="EvolutionaryTrace" id="O75880"/>
<dbReference type="GeneWiki" id="SCO1"/>
<dbReference type="GenomeRNAi" id="6341"/>
<dbReference type="Pharos" id="O75880">
    <property type="development level" value="Tbio"/>
</dbReference>
<dbReference type="PRO" id="PR:O75880"/>
<dbReference type="Proteomes" id="UP000005640">
    <property type="component" value="Chromosome 17"/>
</dbReference>
<dbReference type="RNAct" id="O75880">
    <property type="molecule type" value="protein"/>
</dbReference>
<dbReference type="Bgee" id="ENSG00000133028">
    <property type="expression patterns" value="Expressed in left ventricle myocardium and 170 other cell types or tissues"/>
</dbReference>
<dbReference type="ExpressionAtlas" id="O75880">
    <property type="expression patterns" value="baseline and differential"/>
</dbReference>
<dbReference type="GO" id="GO:0005743">
    <property type="term" value="C:mitochondrial inner membrane"/>
    <property type="evidence" value="ECO:0000314"/>
    <property type="project" value="UniProtKB"/>
</dbReference>
<dbReference type="GO" id="GO:0005739">
    <property type="term" value="C:mitochondrion"/>
    <property type="evidence" value="ECO:0000314"/>
    <property type="project" value="UniProtKB"/>
</dbReference>
<dbReference type="GO" id="GO:0030016">
    <property type="term" value="C:myofibril"/>
    <property type="evidence" value="ECO:0000314"/>
    <property type="project" value="MGI"/>
</dbReference>
<dbReference type="GO" id="GO:0016531">
    <property type="term" value="F:copper chaperone activity"/>
    <property type="evidence" value="ECO:0007669"/>
    <property type="project" value="InterPro"/>
</dbReference>
<dbReference type="GO" id="GO:0005507">
    <property type="term" value="F:copper ion binding"/>
    <property type="evidence" value="ECO:0007669"/>
    <property type="project" value="InterPro"/>
</dbReference>
<dbReference type="GO" id="GO:0006878">
    <property type="term" value="P:intracellular copper ion homeostasis"/>
    <property type="evidence" value="ECO:0007669"/>
    <property type="project" value="InterPro"/>
</dbReference>
<dbReference type="GO" id="GO:0033617">
    <property type="term" value="P:mitochondrial cytochrome c oxidase assembly"/>
    <property type="evidence" value="ECO:0000315"/>
    <property type="project" value="UniProtKB"/>
</dbReference>
<dbReference type="CDD" id="cd02968">
    <property type="entry name" value="SCO"/>
    <property type="match status" value="1"/>
</dbReference>
<dbReference type="FunFam" id="3.40.30.10:FF:000013">
    <property type="entry name" value="Blast:Protein SCO1 homolog, mitochondrial"/>
    <property type="match status" value="1"/>
</dbReference>
<dbReference type="Gene3D" id="3.40.30.10">
    <property type="entry name" value="Glutaredoxin"/>
    <property type="match status" value="1"/>
</dbReference>
<dbReference type="InterPro" id="IPR003782">
    <property type="entry name" value="SCO1/SenC"/>
</dbReference>
<dbReference type="InterPro" id="IPR017276">
    <property type="entry name" value="Synth_of_cyt-c-oxidase_Sco1/2"/>
</dbReference>
<dbReference type="InterPro" id="IPR036249">
    <property type="entry name" value="Thioredoxin-like_sf"/>
</dbReference>
<dbReference type="PANTHER" id="PTHR12151">
    <property type="entry name" value="ELECTRON TRANSPORT PROTIN SCO1/SENC FAMILY MEMBER"/>
    <property type="match status" value="1"/>
</dbReference>
<dbReference type="PANTHER" id="PTHR12151:SF4">
    <property type="entry name" value="PROTEIN SCO1 HOMOLOG, MITOCHONDRIAL"/>
    <property type="match status" value="1"/>
</dbReference>
<dbReference type="Pfam" id="PF02630">
    <property type="entry name" value="SCO1-SenC"/>
    <property type="match status" value="1"/>
</dbReference>
<dbReference type="PIRSF" id="PIRSF037736">
    <property type="entry name" value="SCO1"/>
    <property type="match status" value="1"/>
</dbReference>
<dbReference type="SUPFAM" id="SSF52833">
    <property type="entry name" value="Thioredoxin-like"/>
    <property type="match status" value="1"/>
</dbReference>
<keyword id="KW-0002">3D-structure</keyword>
<keyword id="KW-0143">Chaperone</keyword>
<keyword id="KW-0186">Copper</keyword>
<keyword id="KW-0225">Disease variant</keyword>
<keyword id="KW-1015">Disulfide bond</keyword>
<keyword id="KW-0472">Membrane</keyword>
<keyword id="KW-0479">Metal-binding</keyword>
<keyword id="KW-0496">Mitochondrion</keyword>
<keyword id="KW-0999">Mitochondrion inner membrane</keyword>
<keyword id="KW-1274">Primary mitochondrial disease</keyword>
<keyword id="KW-1267">Proteomics identification</keyword>
<keyword id="KW-1185">Reference proteome</keyword>
<keyword id="KW-0809">Transit peptide</keyword>
<keyword id="KW-0812">Transmembrane</keyword>
<keyword id="KW-1133">Transmembrane helix</keyword>
<gene>
    <name type="primary">SCO1</name>
    <name type="synonym">SCOD1</name>
</gene>